<protein>
    <recommendedName>
        <fullName evidence="1">Holliday junction branch migration complex subunit RuvA</fullName>
    </recommendedName>
</protein>
<sequence>MIASLRGTVLDIQLDHAVLECAGVGYKVLATPAMLGTLQRGEEARVMTTLVVKEDSMTLYGFTSQDDRDMFHVLQTVSGLGPKLALAALSVMSAGDLAQAIAGEEAARLQKIPGVGKRVAQRLILELKDKVKAFAPAESADLSSAAPAAAGPVVEDVVEALIGLGFTDKMARPVVESVVAEQPDAATPVVLRAALSQLGAKK</sequence>
<feature type="chain" id="PRO_1000195131" description="Holliday junction branch migration complex subunit RuvA">
    <location>
        <begin position="1"/>
        <end position="202"/>
    </location>
</feature>
<feature type="region of interest" description="Domain I" evidence="1">
    <location>
        <begin position="1"/>
        <end position="63"/>
    </location>
</feature>
<feature type="region of interest" description="Domain II" evidence="1">
    <location>
        <begin position="64"/>
        <end position="142"/>
    </location>
</feature>
<feature type="region of interest" description="Flexible linker" evidence="1">
    <location>
        <begin position="143"/>
        <end position="148"/>
    </location>
</feature>
<feature type="region of interest" description="Domain III" evidence="1">
    <location>
        <begin position="149"/>
        <end position="202"/>
    </location>
</feature>
<keyword id="KW-0963">Cytoplasm</keyword>
<keyword id="KW-0227">DNA damage</keyword>
<keyword id="KW-0233">DNA recombination</keyword>
<keyword id="KW-0234">DNA repair</keyword>
<keyword id="KW-0238">DNA-binding</keyword>
<keyword id="KW-1185">Reference proteome</keyword>
<dbReference type="EMBL" id="CP001601">
    <property type="protein sequence ID" value="ACP33011.1"/>
    <property type="molecule type" value="Genomic_DNA"/>
</dbReference>
<dbReference type="RefSeq" id="WP_010190175.1">
    <property type="nucleotide sequence ID" value="NC_012590.1"/>
</dbReference>
<dbReference type="SMR" id="C3PGQ7"/>
<dbReference type="STRING" id="548476.cauri_1418"/>
<dbReference type="GeneID" id="31924044"/>
<dbReference type="KEGG" id="car:cauri_1418"/>
<dbReference type="eggNOG" id="COG0632">
    <property type="taxonomic scope" value="Bacteria"/>
</dbReference>
<dbReference type="HOGENOM" id="CLU_087936_2_1_11"/>
<dbReference type="OrthoDB" id="5293449at2"/>
<dbReference type="Proteomes" id="UP000002077">
    <property type="component" value="Chromosome"/>
</dbReference>
<dbReference type="GO" id="GO:0005737">
    <property type="term" value="C:cytoplasm"/>
    <property type="evidence" value="ECO:0007669"/>
    <property type="project" value="UniProtKB-SubCell"/>
</dbReference>
<dbReference type="GO" id="GO:0009379">
    <property type="term" value="C:Holliday junction helicase complex"/>
    <property type="evidence" value="ECO:0007669"/>
    <property type="project" value="InterPro"/>
</dbReference>
<dbReference type="GO" id="GO:0048476">
    <property type="term" value="C:Holliday junction resolvase complex"/>
    <property type="evidence" value="ECO:0007669"/>
    <property type="project" value="UniProtKB-UniRule"/>
</dbReference>
<dbReference type="GO" id="GO:0005524">
    <property type="term" value="F:ATP binding"/>
    <property type="evidence" value="ECO:0007669"/>
    <property type="project" value="InterPro"/>
</dbReference>
<dbReference type="GO" id="GO:0000400">
    <property type="term" value="F:four-way junction DNA binding"/>
    <property type="evidence" value="ECO:0007669"/>
    <property type="project" value="UniProtKB-UniRule"/>
</dbReference>
<dbReference type="GO" id="GO:0009378">
    <property type="term" value="F:four-way junction helicase activity"/>
    <property type="evidence" value="ECO:0007669"/>
    <property type="project" value="InterPro"/>
</dbReference>
<dbReference type="GO" id="GO:0006310">
    <property type="term" value="P:DNA recombination"/>
    <property type="evidence" value="ECO:0007669"/>
    <property type="project" value="UniProtKB-UniRule"/>
</dbReference>
<dbReference type="GO" id="GO:0006281">
    <property type="term" value="P:DNA repair"/>
    <property type="evidence" value="ECO:0007669"/>
    <property type="project" value="UniProtKB-UniRule"/>
</dbReference>
<dbReference type="CDD" id="cd14332">
    <property type="entry name" value="UBA_RuvA_C"/>
    <property type="match status" value="1"/>
</dbReference>
<dbReference type="FunFam" id="2.40.50.140:FF:000083">
    <property type="entry name" value="Holliday junction ATP-dependent DNA helicase RuvA"/>
    <property type="match status" value="1"/>
</dbReference>
<dbReference type="Gene3D" id="1.10.150.20">
    <property type="entry name" value="5' to 3' exonuclease, C-terminal subdomain"/>
    <property type="match status" value="1"/>
</dbReference>
<dbReference type="Gene3D" id="1.10.8.10">
    <property type="entry name" value="DNA helicase RuvA subunit, C-terminal domain"/>
    <property type="match status" value="1"/>
</dbReference>
<dbReference type="Gene3D" id="2.40.50.140">
    <property type="entry name" value="Nucleic acid-binding proteins"/>
    <property type="match status" value="1"/>
</dbReference>
<dbReference type="HAMAP" id="MF_00031">
    <property type="entry name" value="DNA_HJ_migration_RuvA"/>
    <property type="match status" value="1"/>
</dbReference>
<dbReference type="InterPro" id="IPR013849">
    <property type="entry name" value="DNA_helicase_Holl-junc_RuvA_I"/>
</dbReference>
<dbReference type="InterPro" id="IPR003583">
    <property type="entry name" value="Hlx-hairpin-Hlx_DNA-bd_motif"/>
</dbReference>
<dbReference type="InterPro" id="IPR012340">
    <property type="entry name" value="NA-bd_OB-fold"/>
</dbReference>
<dbReference type="InterPro" id="IPR000085">
    <property type="entry name" value="RuvA"/>
</dbReference>
<dbReference type="InterPro" id="IPR010994">
    <property type="entry name" value="RuvA_2-like"/>
</dbReference>
<dbReference type="InterPro" id="IPR011114">
    <property type="entry name" value="RuvA_C"/>
</dbReference>
<dbReference type="InterPro" id="IPR036267">
    <property type="entry name" value="RuvA_C_sf"/>
</dbReference>
<dbReference type="NCBIfam" id="TIGR00084">
    <property type="entry name" value="ruvA"/>
    <property type="match status" value="1"/>
</dbReference>
<dbReference type="Pfam" id="PF14520">
    <property type="entry name" value="HHH_5"/>
    <property type="match status" value="1"/>
</dbReference>
<dbReference type="Pfam" id="PF07499">
    <property type="entry name" value="RuvA_C"/>
    <property type="match status" value="1"/>
</dbReference>
<dbReference type="Pfam" id="PF01330">
    <property type="entry name" value="RuvA_N"/>
    <property type="match status" value="1"/>
</dbReference>
<dbReference type="SMART" id="SM00278">
    <property type="entry name" value="HhH1"/>
    <property type="match status" value="2"/>
</dbReference>
<dbReference type="SUPFAM" id="SSF46929">
    <property type="entry name" value="DNA helicase RuvA subunit, C-terminal domain"/>
    <property type="match status" value="1"/>
</dbReference>
<dbReference type="SUPFAM" id="SSF50249">
    <property type="entry name" value="Nucleic acid-binding proteins"/>
    <property type="match status" value="1"/>
</dbReference>
<dbReference type="SUPFAM" id="SSF47781">
    <property type="entry name" value="RuvA domain 2-like"/>
    <property type="match status" value="1"/>
</dbReference>
<accession>C3PGQ7</accession>
<comment type="function">
    <text evidence="1">The RuvA-RuvB-RuvC complex processes Holliday junction (HJ) DNA during genetic recombination and DNA repair, while the RuvA-RuvB complex plays an important role in the rescue of blocked DNA replication forks via replication fork reversal (RFR). RuvA specifically binds to HJ cruciform DNA, conferring on it an open structure. The RuvB hexamer acts as an ATP-dependent pump, pulling dsDNA into and through the RuvAB complex. HJ branch migration allows RuvC to scan DNA until it finds its consensus sequence, where it cleaves and resolves the cruciform DNA.</text>
</comment>
<comment type="subunit">
    <text evidence="1">Homotetramer. Forms an RuvA(8)-RuvB(12)-Holliday junction (HJ) complex. HJ DNA is sandwiched between 2 RuvA tetramers; dsDNA enters through RuvA and exits via RuvB. An RuvB hexamer assembles on each DNA strand where it exits the tetramer. Each RuvB hexamer is contacted by two RuvA subunits (via domain III) on 2 adjacent RuvB subunits; this complex drives branch migration. In the full resolvosome a probable DNA-RuvA(4)-RuvB(12)-RuvC(2) complex forms which resolves the HJ.</text>
</comment>
<comment type="subcellular location">
    <subcellularLocation>
        <location evidence="1">Cytoplasm</location>
    </subcellularLocation>
</comment>
<comment type="domain">
    <text evidence="1">Has three domains with a flexible linker between the domains II and III and assumes an 'L' shape. Domain III is highly mobile and contacts RuvB.</text>
</comment>
<comment type="similarity">
    <text evidence="1">Belongs to the RuvA family.</text>
</comment>
<organism>
    <name type="scientific">Corynebacterium aurimucosum (strain ATCC 700975 / DSM 44827 / CIP 107346 / CN-1)</name>
    <name type="common">Corynebacterium nigricans</name>
    <dbReference type="NCBI Taxonomy" id="548476"/>
    <lineage>
        <taxon>Bacteria</taxon>
        <taxon>Bacillati</taxon>
        <taxon>Actinomycetota</taxon>
        <taxon>Actinomycetes</taxon>
        <taxon>Mycobacteriales</taxon>
        <taxon>Corynebacteriaceae</taxon>
        <taxon>Corynebacterium</taxon>
    </lineage>
</organism>
<reference key="1">
    <citation type="journal article" date="2010" name="BMC Genomics">
        <title>Complete genome sequence and lifestyle of black-pigmented Corynebacterium aurimucosum ATCC 700975 (formerly C. nigricans CN-1) isolated from a vaginal swab of a woman with spontaneous abortion.</title>
        <authorList>
            <person name="Trost E."/>
            <person name="Gotker S."/>
            <person name="Schneider J."/>
            <person name="Schneiker-Bekel S."/>
            <person name="Szczepanowski R."/>
            <person name="Tilker A."/>
            <person name="Viehoever P."/>
            <person name="Arnold W."/>
            <person name="Bekel T."/>
            <person name="Blom J."/>
            <person name="Gartemann K.H."/>
            <person name="Linke B."/>
            <person name="Goesmann A."/>
            <person name="Puhler A."/>
            <person name="Shukla S.K."/>
            <person name="Tauch A."/>
        </authorList>
    </citation>
    <scope>NUCLEOTIDE SEQUENCE [LARGE SCALE GENOMIC DNA]</scope>
    <source>
        <strain>ATCC 700975 / DSM 44827 / CIP 107346 / CN-1</strain>
    </source>
</reference>
<gene>
    <name evidence="1" type="primary">ruvA</name>
    <name type="ordered locus">cauri_1418</name>
</gene>
<evidence type="ECO:0000255" key="1">
    <source>
        <dbReference type="HAMAP-Rule" id="MF_00031"/>
    </source>
</evidence>
<name>RUVA_CORA7</name>
<proteinExistence type="inferred from homology"/>